<gene>
    <name evidence="1" type="primary">gshA</name>
    <name type="ordered locus">ETA_26620</name>
</gene>
<sequence length="519" mass="58112">MIPDVSQALSWLEAHPDALNGIGRGIERETLRVRPDGYLATTAHPTSLGAALTHKWITTDFAEALLEFITPVDRDIDRLLAFLRDIHRHTARELGEERMWPMSMPCRVERDGDIELAQYGSSNIGQMKTLYRQGLKNRYGALMQVISGVHYNFSLPLSFWQAWAGVNDAESGKEAISAGYLRLIRNYYRFGWVIPYLFGASPAICSSFLQGKESKLPFEHGDNGMLSLPYATSLRLSDLGYTNKSQSSLGIAFNNLPDYISGLKAAIKTPSEEFAAMGVKDKNGDWLQLNTNVLQIENELYAPIRPKRVTRSGEAPSDALQRGGIEYIEVRSLDINPFSPIGVDADQVRFLDLFLIWCALADAPDMDSAELACTRKNWNRVILEGRKPGQTIGIGCGKTERPLVDVGKALFRDLLRVAKTLDSQGGECQYQEVCERLAASFDDPDLTYSARFLRTLQDNGIEKTGMALAEQYRAQLREEPLQVLTEQRFHDEAQRSRQSQSEIEESDTLSLEAFLQGKS</sequence>
<accession>B2VHD0</accession>
<comment type="catalytic activity">
    <reaction evidence="1">
        <text>L-cysteine + L-glutamate + ATP = gamma-L-glutamyl-L-cysteine + ADP + phosphate + H(+)</text>
        <dbReference type="Rhea" id="RHEA:13285"/>
        <dbReference type="ChEBI" id="CHEBI:15378"/>
        <dbReference type="ChEBI" id="CHEBI:29985"/>
        <dbReference type="ChEBI" id="CHEBI:30616"/>
        <dbReference type="ChEBI" id="CHEBI:35235"/>
        <dbReference type="ChEBI" id="CHEBI:43474"/>
        <dbReference type="ChEBI" id="CHEBI:58173"/>
        <dbReference type="ChEBI" id="CHEBI:456216"/>
        <dbReference type="EC" id="6.3.2.2"/>
    </reaction>
</comment>
<comment type="pathway">
    <text evidence="1">Sulfur metabolism; glutathione biosynthesis; glutathione from L-cysteine and L-glutamate: step 1/2.</text>
</comment>
<comment type="similarity">
    <text evidence="1">Belongs to the glutamate--cysteine ligase type 1 family. Type 1 subfamily.</text>
</comment>
<keyword id="KW-0067">ATP-binding</keyword>
<keyword id="KW-0317">Glutathione biosynthesis</keyword>
<keyword id="KW-0436">Ligase</keyword>
<keyword id="KW-0547">Nucleotide-binding</keyword>
<keyword id="KW-1185">Reference proteome</keyword>
<feature type="chain" id="PRO_1000129595" description="Glutamate--cysteine ligase">
    <location>
        <begin position="1"/>
        <end position="519"/>
    </location>
</feature>
<dbReference type="EC" id="6.3.2.2" evidence="1"/>
<dbReference type="EMBL" id="CU468135">
    <property type="protein sequence ID" value="CAO97708.1"/>
    <property type="molecule type" value="Genomic_DNA"/>
</dbReference>
<dbReference type="RefSeq" id="WP_012442370.1">
    <property type="nucleotide sequence ID" value="NC_010694.1"/>
</dbReference>
<dbReference type="SMR" id="B2VHD0"/>
<dbReference type="STRING" id="465817.ETA_26620"/>
<dbReference type="KEGG" id="eta:ETA_26620"/>
<dbReference type="eggNOG" id="COG2918">
    <property type="taxonomic scope" value="Bacteria"/>
</dbReference>
<dbReference type="HOGENOM" id="CLU_020728_3_0_6"/>
<dbReference type="OrthoDB" id="9803907at2"/>
<dbReference type="UniPathway" id="UPA00142">
    <property type="reaction ID" value="UER00209"/>
</dbReference>
<dbReference type="Proteomes" id="UP000001726">
    <property type="component" value="Chromosome"/>
</dbReference>
<dbReference type="GO" id="GO:0005829">
    <property type="term" value="C:cytosol"/>
    <property type="evidence" value="ECO:0007669"/>
    <property type="project" value="TreeGrafter"/>
</dbReference>
<dbReference type="GO" id="GO:0005524">
    <property type="term" value="F:ATP binding"/>
    <property type="evidence" value="ECO:0007669"/>
    <property type="project" value="UniProtKB-KW"/>
</dbReference>
<dbReference type="GO" id="GO:0004357">
    <property type="term" value="F:glutamate-cysteine ligase activity"/>
    <property type="evidence" value="ECO:0007669"/>
    <property type="project" value="UniProtKB-UniRule"/>
</dbReference>
<dbReference type="GO" id="GO:0046872">
    <property type="term" value="F:metal ion binding"/>
    <property type="evidence" value="ECO:0007669"/>
    <property type="project" value="TreeGrafter"/>
</dbReference>
<dbReference type="GO" id="GO:0006750">
    <property type="term" value="P:glutathione biosynthetic process"/>
    <property type="evidence" value="ECO:0007669"/>
    <property type="project" value="UniProtKB-UniRule"/>
</dbReference>
<dbReference type="FunFam" id="3.30.590.20:FF:000001">
    <property type="entry name" value="Glutamate--cysteine ligase"/>
    <property type="match status" value="1"/>
</dbReference>
<dbReference type="Gene3D" id="3.30.590.20">
    <property type="match status" value="1"/>
</dbReference>
<dbReference type="HAMAP" id="MF_00578">
    <property type="entry name" value="Glu_cys_ligase"/>
    <property type="match status" value="1"/>
</dbReference>
<dbReference type="InterPro" id="IPR014746">
    <property type="entry name" value="Gln_synth/guanido_kin_cat_dom"/>
</dbReference>
<dbReference type="InterPro" id="IPR007370">
    <property type="entry name" value="Glu_cys_ligase"/>
</dbReference>
<dbReference type="InterPro" id="IPR006334">
    <property type="entry name" value="Glut_cys_ligase"/>
</dbReference>
<dbReference type="NCBIfam" id="TIGR01434">
    <property type="entry name" value="glu_cys_ligase"/>
    <property type="match status" value="1"/>
</dbReference>
<dbReference type="PANTHER" id="PTHR38761">
    <property type="entry name" value="GLUTAMATE--CYSTEINE LIGASE"/>
    <property type="match status" value="1"/>
</dbReference>
<dbReference type="PANTHER" id="PTHR38761:SF1">
    <property type="entry name" value="GLUTAMATE--CYSTEINE LIGASE"/>
    <property type="match status" value="1"/>
</dbReference>
<dbReference type="Pfam" id="PF04262">
    <property type="entry name" value="Glu_cys_ligase"/>
    <property type="match status" value="1"/>
</dbReference>
<dbReference type="SUPFAM" id="SSF55931">
    <property type="entry name" value="Glutamine synthetase/guanido kinase"/>
    <property type="match status" value="1"/>
</dbReference>
<proteinExistence type="inferred from homology"/>
<name>GSH1_ERWT9</name>
<evidence type="ECO:0000255" key="1">
    <source>
        <dbReference type="HAMAP-Rule" id="MF_00578"/>
    </source>
</evidence>
<organism>
    <name type="scientific">Erwinia tasmaniensis (strain DSM 17950 / CFBP 7177 / CIP 109463 / NCPPB 4357 / Et1/99)</name>
    <dbReference type="NCBI Taxonomy" id="465817"/>
    <lineage>
        <taxon>Bacteria</taxon>
        <taxon>Pseudomonadati</taxon>
        <taxon>Pseudomonadota</taxon>
        <taxon>Gammaproteobacteria</taxon>
        <taxon>Enterobacterales</taxon>
        <taxon>Erwiniaceae</taxon>
        <taxon>Erwinia</taxon>
    </lineage>
</organism>
<reference key="1">
    <citation type="journal article" date="2008" name="Environ. Microbiol.">
        <title>The genome of Erwinia tasmaniensis strain Et1/99, a non-pathogenic bacterium in the genus Erwinia.</title>
        <authorList>
            <person name="Kube M."/>
            <person name="Migdoll A.M."/>
            <person name="Mueller I."/>
            <person name="Kuhl H."/>
            <person name="Beck A."/>
            <person name="Reinhardt R."/>
            <person name="Geider K."/>
        </authorList>
    </citation>
    <scope>NUCLEOTIDE SEQUENCE [LARGE SCALE GENOMIC DNA]</scope>
    <source>
        <strain>DSM 17950 / CFBP 7177 / CIP 109463 / NCPPB 4357 / Et1/99</strain>
    </source>
</reference>
<protein>
    <recommendedName>
        <fullName evidence="1">Glutamate--cysteine ligase</fullName>
        <ecNumber evidence="1">6.3.2.2</ecNumber>
    </recommendedName>
    <alternativeName>
        <fullName evidence="1">Gamma-ECS</fullName>
        <shortName evidence="1">GCS</shortName>
    </alternativeName>
    <alternativeName>
        <fullName evidence="1">Gamma-glutamylcysteine synthetase</fullName>
    </alternativeName>
</protein>